<protein>
    <recommendedName>
        <fullName evidence="2">2-amino-5-formylamino-6-ribosylaminopyrimidin-4(3H)-one 5'-monophosphate deformylase</fullName>
        <shortName evidence="2">FAPy deformylase</shortName>
        <ecNumber evidence="2">3.5.1.102</ecNumber>
    </recommendedName>
    <alternativeName>
        <fullName evidence="2">Formamide hydrolase</fullName>
    </alternativeName>
</protein>
<reference key="1">
    <citation type="journal article" date="2010" name="J. Bacteriol.">
        <title>Complete genome sequence of Methanothermobacter marburgensis, a methanoarchaeon model organism.</title>
        <authorList>
            <person name="Liesegang H."/>
            <person name="Kaster A.K."/>
            <person name="Wiezer A."/>
            <person name="Goenrich M."/>
            <person name="Wollherr A."/>
            <person name="Seedorf H."/>
            <person name="Gottschalk G."/>
            <person name="Thauer R.K."/>
        </authorList>
    </citation>
    <scope>NUCLEOTIDE SEQUENCE [LARGE SCALE GENOMIC DNA]</scope>
    <source>
        <strain>ATCC BAA-927 / DSM 2133 / JCM 14651 / NBRC 100331 / OCM 82 / Marburg</strain>
    </source>
</reference>
<keyword id="KW-0378">Hydrolase</keyword>
<keyword id="KW-0408">Iron</keyword>
<keyword id="KW-0479">Metal-binding</keyword>
<keyword id="KW-0862">Zinc</keyword>
<sequence length="231" mass="25118">MVELNLDAGNVISGDVHRVGILALGSHLENHGPALPIDTDAKIASYVALEASLRTGAKFLGVIYGATEFPYVKHGIHIERDELLEGDLKPVLRKARKRLNIDAAVIVNGHGGNQLEDCVEDLMDELDMEIIWNNRIVEIEGPHAGSGEVSAGIILGIADLTRLGECRPELYPEIGMIGLREAREANKGIDRAARICEKEGINPDPVLGQRILDDAIESVISDVRELLEMLP</sequence>
<feature type="chain" id="PRO_0000406932" description="2-amino-5-formylamino-6-ribosylaminopyrimidin-4(3H)-one 5'-monophosphate deformylase">
    <location>
        <begin position="1"/>
        <end position="231"/>
    </location>
</feature>
<feature type="binding site" evidence="2">
    <location>
        <position position="29"/>
    </location>
    <ligand>
        <name>Fe cation</name>
        <dbReference type="ChEBI" id="CHEBI:24875"/>
        <label>1</label>
    </ligand>
</feature>
<feature type="binding site" evidence="2">
    <location>
        <position position="31"/>
    </location>
    <ligand>
        <name>Fe cation</name>
        <dbReference type="ChEBI" id="CHEBI:24875"/>
        <label>2</label>
    </ligand>
</feature>
<feature type="binding site" evidence="2">
    <location>
        <position position="40"/>
    </location>
    <ligand>
        <name>Fe cation</name>
        <dbReference type="ChEBI" id="CHEBI:24875"/>
        <label>1</label>
    </ligand>
</feature>
<feature type="binding site" evidence="2">
    <location>
        <position position="40"/>
    </location>
    <ligand>
        <name>Fe cation</name>
        <dbReference type="ChEBI" id="CHEBI:24875"/>
        <label>2</label>
    </ligand>
</feature>
<feature type="binding site" evidence="2">
    <location>
        <position position="110"/>
    </location>
    <ligand>
        <name>Fe cation</name>
        <dbReference type="ChEBI" id="CHEBI:24875"/>
        <label>1</label>
    </ligand>
</feature>
<dbReference type="EC" id="3.5.1.102" evidence="2"/>
<dbReference type="EMBL" id="CP001710">
    <property type="protein sequence ID" value="ADL58625.1"/>
    <property type="molecule type" value="Genomic_DNA"/>
</dbReference>
<dbReference type="RefSeq" id="WP_013295848.1">
    <property type="nucleotide sequence ID" value="NC_014408.1"/>
</dbReference>
<dbReference type="SMR" id="D9PWM7"/>
<dbReference type="STRING" id="79929.MTBMA_c10310"/>
<dbReference type="PaxDb" id="79929-MTBMA_c10310"/>
<dbReference type="GeneID" id="41327829"/>
<dbReference type="GeneID" id="9704739"/>
<dbReference type="KEGG" id="mmg:MTBMA_c10310"/>
<dbReference type="PATRIC" id="fig|79929.8.peg.1012"/>
<dbReference type="HOGENOM" id="CLU_1192640_0_0_2"/>
<dbReference type="OrthoDB" id="46121at2157"/>
<dbReference type="UniPathway" id="UPA00071"/>
<dbReference type="UniPathway" id="UPA00275"/>
<dbReference type="Proteomes" id="UP000000345">
    <property type="component" value="Chromosome"/>
</dbReference>
<dbReference type="GO" id="GO:0043729">
    <property type="term" value="F:2-amino-5-formylamino-6-(5-phosphoribosylamino)pyrimidin-4(3H)-one formate-lyase activity"/>
    <property type="evidence" value="ECO:0007669"/>
    <property type="project" value="UniProtKB-EC"/>
</dbReference>
<dbReference type="GO" id="GO:0008198">
    <property type="term" value="F:ferrous iron binding"/>
    <property type="evidence" value="ECO:0007669"/>
    <property type="project" value="UniProtKB-UniRule"/>
</dbReference>
<dbReference type="GO" id="GO:0052645">
    <property type="term" value="P:F420-0 metabolic process"/>
    <property type="evidence" value="ECO:0007669"/>
    <property type="project" value="UniProtKB-UniRule"/>
</dbReference>
<dbReference type="GO" id="GO:0009231">
    <property type="term" value="P:riboflavin biosynthetic process"/>
    <property type="evidence" value="ECO:0007669"/>
    <property type="project" value="UniProtKB-UniRule"/>
</dbReference>
<dbReference type="Gene3D" id="3.40.50.10310">
    <property type="entry name" value="Creatininase"/>
    <property type="match status" value="1"/>
</dbReference>
<dbReference type="HAMAP" id="MF_02116">
    <property type="entry name" value="FAPy_deform"/>
    <property type="match status" value="1"/>
</dbReference>
<dbReference type="InterPro" id="IPR024087">
    <property type="entry name" value="Creatininase-like_sf"/>
</dbReference>
<dbReference type="InterPro" id="IPR003785">
    <property type="entry name" value="Creatininase/forma_Hydrolase"/>
</dbReference>
<dbReference type="InterPro" id="IPR024901">
    <property type="entry name" value="FAPy_deformylase"/>
</dbReference>
<dbReference type="NCBIfam" id="NF033501">
    <property type="entry name" value="ArfB_arch_rifla"/>
    <property type="match status" value="1"/>
</dbReference>
<dbReference type="PANTHER" id="PTHR35005:SF1">
    <property type="entry name" value="2-AMINO-5-FORMYLAMINO-6-RIBOSYLAMINOPYRIMIDIN-4(3H)-ONE 5'-MONOPHOSPHATE DEFORMYLASE"/>
    <property type="match status" value="1"/>
</dbReference>
<dbReference type="PANTHER" id="PTHR35005">
    <property type="entry name" value="3-DEHYDRO-SCYLLO-INOSOSE HYDROLASE"/>
    <property type="match status" value="1"/>
</dbReference>
<dbReference type="Pfam" id="PF02633">
    <property type="entry name" value="Creatininase"/>
    <property type="match status" value="1"/>
</dbReference>
<dbReference type="SUPFAM" id="SSF102215">
    <property type="entry name" value="Creatininase"/>
    <property type="match status" value="1"/>
</dbReference>
<comment type="function">
    <text evidence="2">Catalyzes the hydrolysis of the formamide of 2-amino-5-formylamino-6-ribosylamino-4(3H)-pyrimidinone 5'-monophosphate (FAPy) to form 2,5-diamino-6-ribosylamino-4(3H)-pyrimidinone 5'-phosphate (APy).</text>
</comment>
<comment type="catalytic activity">
    <reaction evidence="2">
        <text>2-amino-5-formylamino-6-(5-phospho-D-ribosylamino)pyrimidin-4(3H)-one + H2O = 2,5-diamino-6-(1-D-ribosylamino)pyrimidin-4(3H)-one 5'-phosphate + formate + H(+)</text>
        <dbReference type="Rhea" id="RHEA:27282"/>
        <dbReference type="ChEBI" id="CHEBI:15377"/>
        <dbReference type="ChEBI" id="CHEBI:15378"/>
        <dbReference type="ChEBI" id="CHEBI:15740"/>
        <dbReference type="ChEBI" id="CHEBI:57258"/>
        <dbReference type="ChEBI" id="CHEBI:59545"/>
        <dbReference type="EC" id="3.5.1.102"/>
    </reaction>
</comment>
<comment type="cofactor">
    <cofactor evidence="1">
        <name>Fe(2+)</name>
        <dbReference type="ChEBI" id="CHEBI:29033"/>
    </cofactor>
    <text evidence="1">Requires one Fe(2+) ion for activity.</text>
</comment>
<comment type="cofactor">
    <cofactor evidence="1">
        <name>Fe(2+)</name>
        <dbReference type="ChEBI" id="CHEBI:29033"/>
    </cofactor>
    <cofactor evidence="1">
        <name>Zn(2+)</name>
        <dbReference type="ChEBI" id="CHEBI:29105"/>
    </cofactor>
    <text evidence="1">Requires an additional second metal ion that could be Fe(2+) or Zn(2+).</text>
</comment>
<comment type="pathway">
    <text evidence="2">Cofactor biosynthesis; coenzyme F420 biosynthesis.</text>
</comment>
<comment type="pathway">
    <text evidence="2">Cofactor biosynthesis; riboflavin biosynthesis.</text>
</comment>
<comment type="subunit">
    <text evidence="2">Homodimer.</text>
</comment>
<comment type="similarity">
    <text evidence="2">Belongs to the creatininase superfamily. FAPy deformylase family.</text>
</comment>
<accession>D9PWM7</accession>
<name>ARFB_METTM</name>
<evidence type="ECO:0000250" key="1"/>
<evidence type="ECO:0000255" key="2">
    <source>
        <dbReference type="HAMAP-Rule" id="MF_02116"/>
    </source>
</evidence>
<proteinExistence type="inferred from homology"/>
<organism>
    <name type="scientific">Methanothermobacter marburgensis (strain ATCC BAA-927 / DSM 2133 / JCM 14651 / NBRC 100331 / OCM 82 / Marburg)</name>
    <name type="common">Methanobacterium thermoautotrophicum</name>
    <dbReference type="NCBI Taxonomy" id="79929"/>
    <lineage>
        <taxon>Archaea</taxon>
        <taxon>Methanobacteriati</taxon>
        <taxon>Methanobacteriota</taxon>
        <taxon>Methanomada group</taxon>
        <taxon>Methanobacteria</taxon>
        <taxon>Methanobacteriales</taxon>
        <taxon>Methanobacteriaceae</taxon>
        <taxon>Methanothermobacter</taxon>
    </lineage>
</organism>
<gene>
    <name evidence="2" type="primary">arfB</name>
    <name type="ordered locus">MTBMA_c10310</name>
</gene>